<gene>
    <name type="ORF">R05D3.8</name>
</gene>
<accession>P34541</accession>
<protein>
    <recommendedName>
        <fullName>Putative RNA-binding protein R05D3.8</fullName>
    </recommendedName>
</protein>
<keyword id="KW-1185">Reference proteome</keyword>
<keyword id="KW-0694">RNA-binding</keyword>
<dbReference type="EMBL" id="FO081667">
    <property type="protein sequence ID" value="CCD73196.1"/>
    <property type="molecule type" value="Genomic_DNA"/>
</dbReference>
<dbReference type="PIR" id="S44867">
    <property type="entry name" value="S44867"/>
</dbReference>
<dbReference type="RefSeq" id="NP_498843.3">
    <property type="nucleotide sequence ID" value="NM_066442.7"/>
</dbReference>
<dbReference type="SMR" id="P34541"/>
<dbReference type="BioGRID" id="52290">
    <property type="interactions" value="2"/>
</dbReference>
<dbReference type="FunCoup" id="P34541">
    <property type="interactions" value="1469"/>
</dbReference>
<dbReference type="IntAct" id="P34541">
    <property type="interactions" value="1"/>
</dbReference>
<dbReference type="STRING" id="6239.R05D3.8.1"/>
<dbReference type="PaxDb" id="6239-R05D3.8"/>
<dbReference type="PeptideAtlas" id="P34541"/>
<dbReference type="EnsemblMetazoa" id="R05D3.8.1">
    <property type="protein sequence ID" value="R05D3.8.1"/>
    <property type="gene ID" value="WBGene00019881"/>
</dbReference>
<dbReference type="GeneID" id="187602"/>
<dbReference type="KEGG" id="cel:CELE_R05D3.8"/>
<dbReference type="UCSC" id="R05D3.8">
    <property type="organism name" value="c. elegans"/>
</dbReference>
<dbReference type="AGR" id="WB:WBGene00019881"/>
<dbReference type="CTD" id="187602"/>
<dbReference type="WormBase" id="R05D3.8">
    <property type="protein sequence ID" value="CE42017"/>
    <property type="gene ID" value="WBGene00019881"/>
</dbReference>
<dbReference type="eggNOG" id="ENOG502QXGP">
    <property type="taxonomic scope" value="Eukaryota"/>
</dbReference>
<dbReference type="HOGENOM" id="CLU_050432_0_0_1"/>
<dbReference type="InParanoid" id="P34541"/>
<dbReference type="OMA" id="GYGPRKW"/>
<dbReference type="OrthoDB" id="5775724at2759"/>
<dbReference type="PhylomeDB" id="P34541"/>
<dbReference type="Reactome" id="R-CEL-6803529">
    <property type="pathway name" value="FGFR2 alternative splicing"/>
</dbReference>
<dbReference type="Reactome" id="R-CEL-72163">
    <property type="pathway name" value="mRNA Splicing - Major Pathway"/>
</dbReference>
<dbReference type="Reactome" id="R-CEL-72203">
    <property type="pathway name" value="Processing of Capped Intron-Containing Pre-mRNA"/>
</dbReference>
<dbReference type="PRO" id="PR:P34541"/>
<dbReference type="Proteomes" id="UP000001940">
    <property type="component" value="Chromosome III"/>
</dbReference>
<dbReference type="Bgee" id="WBGene00019881">
    <property type="expression patterns" value="Expressed in germ line (C elegans) and 4 other cell types or tissues"/>
</dbReference>
<dbReference type="GO" id="GO:0071013">
    <property type="term" value="C:catalytic step 2 spliceosome"/>
    <property type="evidence" value="ECO:0000318"/>
    <property type="project" value="GO_Central"/>
</dbReference>
<dbReference type="GO" id="GO:0003723">
    <property type="term" value="F:RNA binding"/>
    <property type="evidence" value="ECO:0007669"/>
    <property type="project" value="UniProtKB-KW"/>
</dbReference>
<dbReference type="GO" id="GO:0000398">
    <property type="term" value="P:mRNA splicing, via spliceosome"/>
    <property type="evidence" value="ECO:0000318"/>
    <property type="project" value="GO_Central"/>
</dbReference>
<dbReference type="Gene3D" id="3.30.70.330">
    <property type="match status" value="2"/>
</dbReference>
<dbReference type="InterPro" id="IPR012677">
    <property type="entry name" value="Nucleotide-bd_a/b_plait_sf"/>
</dbReference>
<dbReference type="InterPro" id="IPR035979">
    <property type="entry name" value="RBD_domain_sf"/>
</dbReference>
<dbReference type="InterPro" id="IPR000504">
    <property type="entry name" value="RRM_dom"/>
</dbReference>
<dbReference type="PANTHER" id="PTHR48026">
    <property type="entry name" value="HOMOLOGOUS TO DROSOPHILA SQD (SQUID) PROTEIN"/>
    <property type="match status" value="1"/>
</dbReference>
<dbReference type="PANTHER" id="PTHR48026:SF21">
    <property type="entry name" value="RNA-BINDING PROTEIN R05D3.8-RELATED"/>
    <property type="match status" value="1"/>
</dbReference>
<dbReference type="Pfam" id="PF00076">
    <property type="entry name" value="RRM_1"/>
    <property type="match status" value="1"/>
</dbReference>
<dbReference type="SMART" id="SM00360">
    <property type="entry name" value="RRM"/>
    <property type="match status" value="2"/>
</dbReference>
<dbReference type="SUPFAM" id="SSF54928">
    <property type="entry name" value="RNA-binding domain, RBD"/>
    <property type="match status" value="2"/>
</dbReference>
<dbReference type="PROSITE" id="PS50102">
    <property type="entry name" value="RRM"/>
    <property type="match status" value="1"/>
</dbReference>
<feature type="chain" id="PRO_0000065417" description="Putative RNA-binding protein R05D3.8">
    <location>
        <begin position="1"/>
        <end position="311"/>
    </location>
</feature>
<feature type="domain" description="RRM" evidence="1">
    <location>
        <begin position="155"/>
        <end position="235"/>
    </location>
</feature>
<feature type="region of interest" description="Disordered" evidence="2">
    <location>
        <begin position="261"/>
        <end position="311"/>
    </location>
</feature>
<feature type="compositionally biased region" description="Polar residues" evidence="2">
    <location>
        <begin position="261"/>
        <end position="270"/>
    </location>
</feature>
<evidence type="ECO:0000255" key="1">
    <source>
        <dbReference type="PROSITE-ProRule" id="PRU00176"/>
    </source>
</evidence>
<evidence type="ECO:0000256" key="2">
    <source>
        <dbReference type="SAM" id="MobiDB-lite"/>
    </source>
</evidence>
<reference key="1">
    <citation type="journal article" date="1994" name="Nature">
        <title>2.2 Mb of contiguous nucleotide sequence from chromosome III of C. elegans.</title>
        <authorList>
            <person name="Wilson R."/>
            <person name="Ainscough R."/>
            <person name="Anderson K."/>
            <person name="Baynes C."/>
            <person name="Berks M."/>
            <person name="Bonfield J."/>
            <person name="Burton J."/>
            <person name="Connell M."/>
            <person name="Copsey T."/>
            <person name="Cooper J."/>
            <person name="Coulson A."/>
            <person name="Craxton M."/>
            <person name="Dear S."/>
            <person name="Du Z."/>
            <person name="Durbin R."/>
            <person name="Favello A."/>
            <person name="Fraser A."/>
            <person name="Fulton L."/>
            <person name="Gardner A."/>
            <person name="Green P."/>
            <person name="Hawkins T."/>
            <person name="Hillier L."/>
            <person name="Jier M."/>
            <person name="Johnston L."/>
            <person name="Jones M."/>
            <person name="Kershaw J."/>
            <person name="Kirsten J."/>
            <person name="Laisster N."/>
            <person name="Latreille P."/>
            <person name="Lightning J."/>
            <person name="Lloyd C."/>
            <person name="Mortimore B."/>
            <person name="O'Callaghan M."/>
            <person name="Parsons J."/>
            <person name="Percy C."/>
            <person name="Rifken L."/>
            <person name="Roopra A."/>
            <person name="Saunders D."/>
            <person name="Shownkeen R."/>
            <person name="Sims M."/>
            <person name="Smaldon N."/>
            <person name="Smith A."/>
            <person name="Smith M."/>
            <person name="Sonnhammer E."/>
            <person name="Staden R."/>
            <person name="Sulston J."/>
            <person name="Thierry-Mieg J."/>
            <person name="Thomas K."/>
            <person name="Vaudin M."/>
            <person name="Vaughan K."/>
            <person name="Waterston R."/>
            <person name="Watson A."/>
            <person name="Weinstock L."/>
            <person name="Wilkinson-Sproat J."/>
            <person name="Wohldman P."/>
        </authorList>
    </citation>
    <scope>NUCLEOTIDE SEQUENCE [LARGE SCALE GENOMIC DNA]</scope>
    <source>
        <strain>Bristol N2</strain>
    </source>
</reference>
<reference key="2">
    <citation type="journal article" date="1998" name="Science">
        <title>Genome sequence of the nematode C. elegans: a platform for investigating biology.</title>
        <authorList>
            <consortium name="The C. elegans sequencing consortium"/>
        </authorList>
    </citation>
    <scope>NUCLEOTIDE SEQUENCE [LARGE SCALE GENOMIC DNA]</scope>
    <source>
        <strain>Bristol N2</strain>
    </source>
</reference>
<sequence length="311" mass="35437">MVKRIFVQGLDSYTTESTVKKYFEQFGTLYECILPPPPRYSVFDNGPDEEKISTRSSIRYEPVENDDVLDDELDVERYDVEKHGDFESYMKKIGEGEAFIKEPRKTSAGYAYITFVDSNGYSNCMKSDIHEIDRAKCTVEPAKDENDKKLKVESKRLFVSYFPLDRLTSKELKMNFGAYGKITDVEFVSDSEGPLHFCIITFADSRSVDVLLTKSIYIRDVLMFTRRAVLKESVKIAEHKIKEQEQQNLVQLPPNHTAYLTPSRPVTSVHASSSASSNHYDPSAAAGYAPLYHQPPESDPLSQCGYGPRKW</sequence>
<organism>
    <name type="scientific">Caenorhabditis elegans</name>
    <dbReference type="NCBI Taxonomy" id="6239"/>
    <lineage>
        <taxon>Eukaryota</taxon>
        <taxon>Metazoa</taxon>
        <taxon>Ecdysozoa</taxon>
        <taxon>Nematoda</taxon>
        <taxon>Chromadorea</taxon>
        <taxon>Rhabditida</taxon>
        <taxon>Rhabditina</taxon>
        <taxon>Rhabditomorpha</taxon>
        <taxon>Rhabditoidea</taxon>
        <taxon>Rhabditidae</taxon>
        <taxon>Peloderinae</taxon>
        <taxon>Caenorhabditis</taxon>
    </lineage>
</organism>
<name>YNC8_CAEEL</name>
<proteinExistence type="predicted"/>